<evidence type="ECO:0000255" key="1">
    <source>
        <dbReference type="HAMAP-Rule" id="MF_04201"/>
    </source>
</evidence>
<evidence type="ECO:0000255" key="2">
    <source>
        <dbReference type="PROSITE-ProRule" id="PRU01275"/>
    </source>
</evidence>
<sequence>MSNSSVPLLEVYVHLRNWNFSWNLILTLFIVVLQYGHYKYSRLLYGLKMSVLWCLWPLVLALSIFDCFVNFNVDWVFFGFSILMSIITLCLWVMYFVNSFRLWRRVKTFWAFNPETNAIISLQVYGHNYYLPVMAAPTGVTLTLLSGVLLVDGHKIATRVQVGQLPKYVIVATPSTTIVCDRVGRSVNETSQTGWAFYVRAKHGDFSGVASQEGVLSEREKLLHLI</sequence>
<accession>Q6Q1R9</accession>
<dbReference type="EMBL" id="AY567487">
    <property type="protein sequence ID" value="AAS58180.1"/>
    <property type="molecule type" value="Genomic_RNA"/>
</dbReference>
<dbReference type="RefSeq" id="YP_003770.1">
    <property type="nucleotide sequence ID" value="NC_005831.2"/>
</dbReference>
<dbReference type="SMR" id="Q6Q1R9"/>
<dbReference type="DNASU" id="2943503"/>
<dbReference type="GeneID" id="2943503"/>
<dbReference type="KEGG" id="vg:2943503"/>
<dbReference type="OrthoDB" id="8130at10239"/>
<dbReference type="Proteomes" id="UP000008573">
    <property type="component" value="Genome"/>
</dbReference>
<dbReference type="GO" id="GO:0044178">
    <property type="term" value="C:host cell Golgi membrane"/>
    <property type="evidence" value="ECO:0007669"/>
    <property type="project" value="UniProtKB-SubCell"/>
</dbReference>
<dbReference type="GO" id="GO:0016020">
    <property type="term" value="C:membrane"/>
    <property type="evidence" value="ECO:0007669"/>
    <property type="project" value="UniProtKB-UniRule"/>
</dbReference>
<dbReference type="GO" id="GO:0019031">
    <property type="term" value="C:viral envelope"/>
    <property type="evidence" value="ECO:0007669"/>
    <property type="project" value="UniProtKB-UniRule"/>
</dbReference>
<dbReference type="GO" id="GO:0055036">
    <property type="term" value="C:virion membrane"/>
    <property type="evidence" value="ECO:0007669"/>
    <property type="project" value="UniProtKB-SubCell"/>
</dbReference>
<dbReference type="GO" id="GO:0039660">
    <property type="term" value="F:structural constituent of virion"/>
    <property type="evidence" value="ECO:0007669"/>
    <property type="project" value="UniProtKB-UniRule"/>
</dbReference>
<dbReference type="CDD" id="cd21564">
    <property type="entry name" value="alphaCoV_M"/>
    <property type="match status" value="1"/>
</dbReference>
<dbReference type="HAMAP" id="MF_04201">
    <property type="entry name" value="ALPHA_CORONA_M"/>
    <property type="match status" value="1"/>
</dbReference>
<dbReference type="InterPro" id="IPR042551">
    <property type="entry name" value="ALPHA_CORONA_M"/>
</dbReference>
<dbReference type="InterPro" id="IPR002574">
    <property type="entry name" value="M_CoV"/>
</dbReference>
<dbReference type="Pfam" id="PF01635">
    <property type="entry name" value="CoV_M"/>
    <property type="match status" value="1"/>
</dbReference>
<dbReference type="PROSITE" id="PS51927">
    <property type="entry name" value="COV_M"/>
    <property type="match status" value="1"/>
</dbReference>
<gene>
    <name evidence="1" type="primary">M</name>
    <name type="ORF">5</name>
</gene>
<name>VME1_CVHNL</name>
<comment type="function">
    <text evidence="1 2">Component of the viral envelope that plays a central role in virus morphogenesis and assembly via its interactions with other viral proteins.</text>
</comment>
<comment type="subunit">
    <text evidence="1 2">Homomultimer. Interacts with envelope E protein in the budding compartment of the host cell, which is located between endoplasmic reticulum and the Golgi complex. Forms a complex with HE and S proteins. Interacts with nucleocapsid N protein. This interaction probably participates in RNA packaging into the virus.</text>
</comment>
<comment type="subcellular location">
    <subcellularLocation>
        <location evidence="1">Virion membrane</location>
        <topology evidence="1">Multi-pass membrane protein</topology>
    </subcellularLocation>
    <subcellularLocation>
        <location evidence="1">Host Golgi apparatus membrane</location>
        <topology evidence="1">Multi-pass membrane protein</topology>
    </subcellularLocation>
    <text evidence="1">Largely embedded in the lipid bilayer.</text>
</comment>
<comment type="similarity">
    <text evidence="1">Belongs to the alphacoronaviruses M protein family.</text>
</comment>
<proteinExistence type="inferred from homology"/>
<feature type="chain" id="PRO_0000283931" description="Membrane protein">
    <location>
        <begin position="1"/>
        <end position="226"/>
    </location>
</feature>
<feature type="topological domain" description="Virion surface" evidence="1">
    <location>
        <begin position="1"/>
        <end position="11"/>
    </location>
</feature>
<feature type="transmembrane region" description="Helical" evidence="1">
    <location>
        <begin position="12"/>
        <end position="32"/>
    </location>
</feature>
<feature type="topological domain" description="Intravirion" evidence="1">
    <location>
        <begin position="33"/>
        <end position="41"/>
    </location>
</feature>
<feature type="transmembrane region" description="Helical" evidence="1">
    <location>
        <begin position="42"/>
        <end position="62"/>
    </location>
</feature>
<feature type="topological domain" description="Virion surface" evidence="1">
    <location>
        <begin position="63"/>
        <end position="75"/>
    </location>
</feature>
<feature type="transmembrane region" description="Helical" evidence="1">
    <location>
        <begin position="76"/>
        <end position="96"/>
    </location>
</feature>
<feature type="topological domain" description="Intravirion" evidence="1">
    <location>
        <begin position="97"/>
        <end position="226"/>
    </location>
</feature>
<feature type="region of interest" description="Interaction with N protein" evidence="1">
    <location>
        <begin position="200"/>
        <end position="216"/>
    </location>
</feature>
<protein>
    <recommendedName>
        <fullName evidence="1">Membrane protein</fullName>
        <shortName evidence="1">M protein</shortName>
    </recommendedName>
    <alternativeName>
        <fullName evidence="1">E1 glycoprotein</fullName>
    </alternativeName>
    <alternativeName>
        <fullName evidence="1">Matrix glycoprotein</fullName>
    </alternativeName>
    <alternativeName>
        <fullName evidence="1">Membrane glycoprotein</fullName>
    </alternativeName>
</protein>
<keyword id="KW-0325">Glycoprotein</keyword>
<keyword id="KW-1040">Host Golgi apparatus</keyword>
<keyword id="KW-1043">Host membrane</keyword>
<keyword id="KW-0472">Membrane</keyword>
<keyword id="KW-1185">Reference proteome</keyword>
<keyword id="KW-0812">Transmembrane</keyword>
<keyword id="KW-1133">Transmembrane helix</keyword>
<keyword id="KW-0261">Viral envelope protein</keyword>
<keyword id="KW-0468">Viral matrix protein</keyword>
<keyword id="KW-0946">Virion</keyword>
<organismHost>
    <name type="scientific">Homo sapiens</name>
    <name type="common">Human</name>
    <dbReference type="NCBI Taxonomy" id="9606"/>
</organismHost>
<reference key="1">
    <citation type="journal article" date="2004" name="Nat. Med.">
        <title>Identification of a new human coronavirus.</title>
        <authorList>
            <person name="Van Der Hoek L."/>
            <person name="Pyrc K."/>
            <person name="Jebbink M.F."/>
            <person name="Vermeulen-Oost W."/>
            <person name="Berkhout R.J."/>
            <person name="Wolthers K.C."/>
            <person name="Wertheim-Van Dillen P.M."/>
            <person name="Kaandorp J."/>
            <person name="Spaargaren J."/>
            <person name="Berkhout B."/>
        </authorList>
    </citation>
    <scope>NUCLEOTIDE SEQUENCE [GENOMIC RNA]</scope>
    <source>
        <strain>Isolate Amsterdam I</strain>
    </source>
</reference>
<organism>
    <name type="scientific">Human coronavirus NL63</name>
    <name type="common">HCoV-NL63</name>
    <dbReference type="NCBI Taxonomy" id="277944"/>
    <lineage>
        <taxon>Viruses</taxon>
        <taxon>Riboviria</taxon>
        <taxon>Orthornavirae</taxon>
        <taxon>Pisuviricota</taxon>
        <taxon>Pisoniviricetes</taxon>
        <taxon>Nidovirales</taxon>
        <taxon>Cornidovirineae</taxon>
        <taxon>Coronaviridae</taxon>
        <taxon>Orthocoronavirinae</taxon>
        <taxon>Alphacoronavirus</taxon>
        <taxon>Setracovirus</taxon>
    </lineage>
</organism>